<name>SSUD_BRADU</name>
<proteinExistence type="inferred from homology"/>
<gene>
    <name evidence="1" type="primary">ssuD</name>
    <name type="ordered locus">bll7010</name>
</gene>
<accession>Q89ER2</accession>
<keyword id="KW-0285">Flavoprotein</keyword>
<keyword id="KW-0288">FMN</keyword>
<keyword id="KW-0503">Monooxygenase</keyword>
<keyword id="KW-0560">Oxidoreductase</keyword>
<keyword id="KW-1185">Reference proteome</keyword>
<protein>
    <recommendedName>
        <fullName evidence="1">Alkanesulfonate monooxygenase</fullName>
        <ecNumber evidence="1">1.14.14.5</ecNumber>
    </recommendedName>
    <alternativeName>
        <fullName evidence="1">FMNH2-dependent aliphatic sulfonate monooxygenase</fullName>
    </alternativeName>
</protein>
<dbReference type="EC" id="1.14.14.5" evidence="1"/>
<dbReference type="EMBL" id="BA000040">
    <property type="protein sequence ID" value="BAC52275.1"/>
    <property type="molecule type" value="Genomic_DNA"/>
</dbReference>
<dbReference type="RefSeq" id="NP_773650.1">
    <property type="nucleotide sequence ID" value="NC_004463.1"/>
</dbReference>
<dbReference type="RefSeq" id="WP_011089747.1">
    <property type="nucleotide sequence ID" value="NC_004463.1"/>
</dbReference>
<dbReference type="SMR" id="Q89ER2"/>
<dbReference type="FunCoup" id="Q89ER2">
    <property type="interactions" value="221"/>
</dbReference>
<dbReference type="STRING" id="224911.AAV28_32655"/>
<dbReference type="EnsemblBacteria" id="BAC52275">
    <property type="protein sequence ID" value="BAC52275"/>
    <property type="gene ID" value="BAC52275"/>
</dbReference>
<dbReference type="GeneID" id="46493973"/>
<dbReference type="KEGG" id="bja:bll7010"/>
<dbReference type="PATRIC" id="fig|224911.44.peg.7052"/>
<dbReference type="eggNOG" id="COG2141">
    <property type="taxonomic scope" value="Bacteria"/>
</dbReference>
<dbReference type="HOGENOM" id="CLU_027853_1_0_5"/>
<dbReference type="InParanoid" id="Q89ER2"/>
<dbReference type="OrthoDB" id="9814695at2"/>
<dbReference type="PhylomeDB" id="Q89ER2"/>
<dbReference type="Proteomes" id="UP000002526">
    <property type="component" value="Chromosome"/>
</dbReference>
<dbReference type="GO" id="GO:0008726">
    <property type="term" value="F:alkanesulfonate monooxygenase activity"/>
    <property type="evidence" value="ECO:0000318"/>
    <property type="project" value="GO_Central"/>
</dbReference>
<dbReference type="GO" id="GO:0046306">
    <property type="term" value="P:alkanesulfonate catabolic process"/>
    <property type="evidence" value="ECO:0000318"/>
    <property type="project" value="GO_Central"/>
</dbReference>
<dbReference type="CDD" id="cd01094">
    <property type="entry name" value="Alkanesulfonate_monoxygenase"/>
    <property type="match status" value="1"/>
</dbReference>
<dbReference type="FunFam" id="3.20.20.30:FF:000001">
    <property type="entry name" value="Alkanesulfonate monooxygenase"/>
    <property type="match status" value="1"/>
</dbReference>
<dbReference type="Gene3D" id="3.20.20.30">
    <property type="entry name" value="Luciferase-like domain"/>
    <property type="match status" value="1"/>
</dbReference>
<dbReference type="HAMAP" id="MF_01229">
    <property type="entry name" value="Alkanesulf_monooxygen"/>
    <property type="match status" value="1"/>
</dbReference>
<dbReference type="InterPro" id="IPR019911">
    <property type="entry name" value="Alkanesulphonate_mOase_FMN-dep"/>
</dbReference>
<dbReference type="InterPro" id="IPR011251">
    <property type="entry name" value="Luciferase-like_dom"/>
</dbReference>
<dbReference type="InterPro" id="IPR036661">
    <property type="entry name" value="Luciferase-like_sf"/>
</dbReference>
<dbReference type="InterPro" id="IPR050172">
    <property type="entry name" value="SsuD_RutA_monooxygenase"/>
</dbReference>
<dbReference type="NCBIfam" id="TIGR03565">
    <property type="entry name" value="alk_sulf_monoox"/>
    <property type="match status" value="1"/>
</dbReference>
<dbReference type="NCBIfam" id="NF001939">
    <property type="entry name" value="PRK00719.1"/>
    <property type="match status" value="1"/>
</dbReference>
<dbReference type="PANTHER" id="PTHR42847">
    <property type="entry name" value="ALKANESULFONATE MONOOXYGENASE"/>
    <property type="match status" value="1"/>
</dbReference>
<dbReference type="PANTHER" id="PTHR42847:SF4">
    <property type="entry name" value="ALKANESULFONATE MONOOXYGENASE-RELATED"/>
    <property type="match status" value="1"/>
</dbReference>
<dbReference type="Pfam" id="PF00296">
    <property type="entry name" value="Bac_luciferase"/>
    <property type="match status" value="1"/>
</dbReference>
<dbReference type="SUPFAM" id="SSF51679">
    <property type="entry name" value="Bacterial luciferase-like"/>
    <property type="match status" value="1"/>
</dbReference>
<feature type="chain" id="PRO_0000216704" description="Alkanesulfonate monooxygenase">
    <location>
        <begin position="1"/>
        <end position="387"/>
    </location>
</feature>
<feature type="region of interest" description="Disordered" evidence="2">
    <location>
        <begin position="365"/>
        <end position="387"/>
    </location>
</feature>
<comment type="function">
    <text evidence="1">Catalyzes the desulfonation of aliphatic sulfonates.</text>
</comment>
<comment type="catalytic activity">
    <reaction evidence="1">
        <text>an alkanesulfonate + FMNH2 + O2 = an aldehyde + FMN + sulfite + H2O + 2 H(+)</text>
        <dbReference type="Rhea" id="RHEA:23064"/>
        <dbReference type="ChEBI" id="CHEBI:15377"/>
        <dbReference type="ChEBI" id="CHEBI:15378"/>
        <dbReference type="ChEBI" id="CHEBI:15379"/>
        <dbReference type="ChEBI" id="CHEBI:17359"/>
        <dbReference type="ChEBI" id="CHEBI:17478"/>
        <dbReference type="ChEBI" id="CHEBI:57618"/>
        <dbReference type="ChEBI" id="CHEBI:58210"/>
        <dbReference type="ChEBI" id="CHEBI:134249"/>
        <dbReference type="EC" id="1.14.14.5"/>
    </reaction>
</comment>
<comment type="similarity">
    <text evidence="1">Belongs to the SsuD family.</text>
</comment>
<evidence type="ECO:0000255" key="1">
    <source>
        <dbReference type="HAMAP-Rule" id="MF_01229"/>
    </source>
</evidence>
<evidence type="ECO:0000256" key="2">
    <source>
        <dbReference type="SAM" id="MobiDB-lite"/>
    </source>
</evidence>
<organism>
    <name type="scientific">Bradyrhizobium diazoefficiens (strain JCM 10833 / BCRC 13528 / IAM 13628 / NBRC 14792 / USDA 110)</name>
    <dbReference type="NCBI Taxonomy" id="224911"/>
    <lineage>
        <taxon>Bacteria</taxon>
        <taxon>Pseudomonadati</taxon>
        <taxon>Pseudomonadota</taxon>
        <taxon>Alphaproteobacteria</taxon>
        <taxon>Hyphomicrobiales</taxon>
        <taxon>Nitrobacteraceae</taxon>
        <taxon>Bradyrhizobium</taxon>
    </lineage>
</organism>
<sequence length="387" mass="42411">MSQSKSNILWFLPTHGDGRYLGTATGGREVNFNYLRQIAQAADQLGYFGVLLPTGRSCEDSWIVASSVAPFTERLRYLVAVRPGLQSPSVAARMTATLDRITNGRLLINVVTGGDPVENKGDGIFLGHDERYEVTREFLNVYSDLLGGKAVNVEGKHIRIEDGKLLFPPVQSPRPPLYFGGSSDAGIDVAVDTVDKYLTWGEPPAQVAEKIARVREVANARGRKLSFGIRLHVIVRETNEEAWSAANELIKHVSDDTIARAQRNFARMDSVGQQRMAQLHGGKRDKLEISPNLWAGVGLVRGGAGTALVGDAQTVAARIKEYQDIGIDTFIMSGYPHLEEAYRFAELVFPLLSLDHGSNVTRLHHNSGPFGETVGNDYRPSRLASQS</sequence>
<reference key="1">
    <citation type="journal article" date="2002" name="DNA Res.">
        <title>Complete genomic sequence of nitrogen-fixing symbiotic bacterium Bradyrhizobium japonicum USDA110.</title>
        <authorList>
            <person name="Kaneko T."/>
            <person name="Nakamura Y."/>
            <person name="Sato S."/>
            <person name="Minamisawa K."/>
            <person name="Uchiumi T."/>
            <person name="Sasamoto S."/>
            <person name="Watanabe A."/>
            <person name="Idesawa K."/>
            <person name="Iriguchi M."/>
            <person name="Kawashima K."/>
            <person name="Kohara M."/>
            <person name="Matsumoto M."/>
            <person name="Shimpo S."/>
            <person name="Tsuruoka H."/>
            <person name="Wada T."/>
            <person name="Yamada M."/>
            <person name="Tabata S."/>
        </authorList>
    </citation>
    <scope>NUCLEOTIDE SEQUENCE [LARGE SCALE GENOMIC DNA]</scope>
    <source>
        <strain>JCM 10833 / BCRC 13528 / IAM 13628 / NBRC 14792 / USDA 110</strain>
    </source>
</reference>